<protein>
    <recommendedName>
        <fullName evidence="1">DNA primase</fullName>
        <ecNumber evidence="1">2.7.7.101</ecNumber>
    </recommendedName>
</protein>
<name>DNAG_MYCS2</name>
<comment type="function">
    <text evidence="1">RNA polymerase that catalyzes the synthesis of short RNA molecules used as primers for DNA polymerase during DNA replication.</text>
</comment>
<comment type="catalytic activity">
    <reaction evidence="1">
        <text>ssDNA + n NTP = ssDNA/pppN(pN)n-1 hybrid + (n-1) diphosphate.</text>
        <dbReference type="EC" id="2.7.7.101"/>
    </reaction>
</comment>
<comment type="cofactor">
    <cofactor evidence="1">
        <name>Zn(2+)</name>
        <dbReference type="ChEBI" id="CHEBI:29105"/>
    </cofactor>
    <text evidence="1">Binds 1 zinc ion per monomer.</text>
</comment>
<comment type="cofactor">
    <cofactor evidence="1">
        <name>Mg(2+)</name>
        <dbReference type="ChEBI" id="CHEBI:18420"/>
    </cofactor>
    <text evidence="1">Binds two Mg(2+) per subunit.</text>
</comment>
<comment type="subunit">
    <text evidence="1">Monomer. Interacts with DnaB.</text>
</comment>
<comment type="domain">
    <text evidence="1">Contains an N-terminal zinc-binding domain, a central core domain that contains the primase activity, and a C-terminal DnaB-binding domain.</text>
</comment>
<comment type="similarity">
    <text evidence="1">Belongs to the DnaG primase family.</text>
</comment>
<reference key="1">
    <citation type="journal article" date="1998" name="J. Bacteriol.">
        <title>Characterization of the dnaG locus in Mycobacterium smegmatis reveals linkage of DNA replication and cell division.</title>
        <authorList>
            <person name="Klann A.G."/>
            <person name="Belanger A.E."/>
            <person name="Abanes-De Mello A."/>
            <person name="Lee J.Y."/>
            <person name="Hatfull G.F."/>
        </authorList>
    </citation>
    <scope>NUCLEOTIDE SEQUENCE [GENOMIC DNA]</scope>
</reference>
<reference key="2">
    <citation type="submission" date="2006-10" db="EMBL/GenBank/DDBJ databases">
        <authorList>
            <person name="Fleischmann R.D."/>
            <person name="Dodson R.J."/>
            <person name="Haft D.H."/>
            <person name="Merkel J.S."/>
            <person name="Nelson W.C."/>
            <person name="Fraser C.M."/>
        </authorList>
    </citation>
    <scope>NUCLEOTIDE SEQUENCE [LARGE SCALE GENOMIC DNA]</scope>
    <source>
        <strain>ATCC 700084 / mc(2)155</strain>
    </source>
</reference>
<reference key="3">
    <citation type="journal article" date="2007" name="Genome Biol.">
        <title>Interrupted coding sequences in Mycobacterium smegmatis: authentic mutations or sequencing errors?</title>
        <authorList>
            <person name="Deshayes C."/>
            <person name="Perrodou E."/>
            <person name="Gallien S."/>
            <person name="Euphrasie D."/>
            <person name="Schaeffer C."/>
            <person name="Van-Dorsselaer A."/>
            <person name="Poch O."/>
            <person name="Lecompte O."/>
            <person name="Reyrat J.-M."/>
        </authorList>
    </citation>
    <scope>NUCLEOTIDE SEQUENCE [LARGE SCALE GENOMIC DNA]</scope>
    <source>
        <strain>ATCC 700084 / mc(2)155</strain>
    </source>
</reference>
<reference key="4">
    <citation type="journal article" date="2009" name="Genome Res.">
        <title>Ortho-proteogenomics: multiple proteomes investigation through orthology and a new MS-based protocol.</title>
        <authorList>
            <person name="Gallien S."/>
            <person name="Perrodou E."/>
            <person name="Carapito C."/>
            <person name="Deshayes C."/>
            <person name="Reyrat J.-M."/>
            <person name="Van Dorsselaer A."/>
            <person name="Poch O."/>
            <person name="Schaeffer C."/>
            <person name="Lecompte O."/>
        </authorList>
    </citation>
    <scope>NUCLEOTIDE SEQUENCE [LARGE SCALE GENOMIC DNA]</scope>
    <source>
        <strain>ATCC 700084 / mc(2)155</strain>
    </source>
</reference>
<proteinExistence type="inferred from homology"/>
<sequence length="636" mass="69816">MPVAGGRIPDRDIAAIREKVRIEDVVGDYVQLRRAGADSLKGLCPFHDEKTPSFHVRPNHGHFHCFGCGEGGDVYAFIQKIEHVSFVEAVELLADKVGYTVTYTGSSTTNVQRDRGSRSRLLAANAAAAEFYAEALQSEEAAPARQYLTERNFDAAAAAKFGCGYAPSGWDKLTKHLLRKGFEFKELEAAGLSREGKRGPMDRFHRRLLWPIRVSSGETIGFGARRLFDDDPNQAKYVNTPETVLYKKSQVLFGLDLAKRDIAKGHQAVVVEGYTDVMAMHLAGVTTAVASCGTAFGEQHLSMLRRLMMDDNFFRGELIYVFDGDDAGRAAAVKAFEGEQNLSGQSFVAVAADGMDPCDLRLRSGDGALRDLVARRTPLFEFVIRSALAEHDLDSAEGRVAALRRCVPMLARIKDPTLRDEYARQLAGWVGWDNVAQVIGRVREEAKGGGRKDNNRRGQETAARPKPPPVQRPDPTDPTLWPQREALKAGLQYPALAGPVFDTLTVESFTHPGYGAVRTAMEAAGGTSAGITGAQWIETVREQTTSPAAANLVNELSVETINVEDDEKLPRYISSVLARLQEVWVGRQIAEVKSKLQRMSPVEQGDEYHALFGDLVAMESYRRSLLEQASGDDLTA</sequence>
<organism>
    <name type="scientific">Mycolicibacterium smegmatis (strain ATCC 700084 / mc(2)155)</name>
    <name type="common">Mycobacterium smegmatis</name>
    <dbReference type="NCBI Taxonomy" id="246196"/>
    <lineage>
        <taxon>Bacteria</taxon>
        <taxon>Bacillati</taxon>
        <taxon>Actinomycetota</taxon>
        <taxon>Actinomycetes</taxon>
        <taxon>Mycobacteriales</taxon>
        <taxon>Mycobacteriaceae</taxon>
        <taxon>Mycolicibacterium</taxon>
    </lineage>
</organism>
<feature type="chain" id="PRO_0000180505" description="DNA primase">
    <location>
        <begin position="1"/>
        <end position="636"/>
    </location>
</feature>
<feature type="domain" description="Toprim" evidence="1">
    <location>
        <begin position="266"/>
        <end position="352"/>
    </location>
</feature>
<feature type="zinc finger region" description="CHC2-type" evidence="1">
    <location>
        <begin position="44"/>
        <end position="68"/>
    </location>
</feature>
<feature type="region of interest" description="Disordered" evidence="2">
    <location>
        <begin position="443"/>
        <end position="481"/>
    </location>
</feature>
<feature type="compositionally biased region" description="Basic and acidic residues" evidence="2">
    <location>
        <begin position="443"/>
        <end position="459"/>
    </location>
</feature>
<feature type="binding site" evidence="1">
    <location>
        <position position="272"/>
    </location>
    <ligand>
        <name>Mg(2+)</name>
        <dbReference type="ChEBI" id="CHEBI:18420"/>
        <label>1</label>
        <note>catalytic</note>
    </ligand>
</feature>
<feature type="binding site" evidence="1">
    <location>
        <position position="323"/>
    </location>
    <ligand>
        <name>Mg(2+)</name>
        <dbReference type="ChEBI" id="CHEBI:18420"/>
        <label>1</label>
        <note>catalytic</note>
    </ligand>
</feature>
<feature type="binding site" evidence="1">
    <location>
        <position position="323"/>
    </location>
    <ligand>
        <name>Mg(2+)</name>
        <dbReference type="ChEBI" id="CHEBI:18420"/>
        <label>2</label>
    </ligand>
</feature>
<feature type="binding site" evidence="1">
    <location>
        <position position="325"/>
    </location>
    <ligand>
        <name>Mg(2+)</name>
        <dbReference type="ChEBI" id="CHEBI:18420"/>
        <label>2</label>
    </ligand>
</feature>
<evidence type="ECO:0000255" key="1">
    <source>
        <dbReference type="HAMAP-Rule" id="MF_00974"/>
    </source>
</evidence>
<evidence type="ECO:0000256" key="2">
    <source>
        <dbReference type="SAM" id="MobiDB-lite"/>
    </source>
</evidence>
<gene>
    <name evidence="1" type="primary">dnaG</name>
    <name type="ordered locus">MSMEG_4482</name>
    <name type="ordered locus">MSMEI_4371</name>
</gene>
<dbReference type="EC" id="2.7.7.101" evidence="1"/>
<dbReference type="EMBL" id="AF027507">
    <property type="protein sequence ID" value="AAB96635.1"/>
    <property type="molecule type" value="Genomic_DNA"/>
</dbReference>
<dbReference type="EMBL" id="CP000480">
    <property type="protein sequence ID" value="ABK71657.1"/>
    <property type="molecule type" value="Genomic_DNA"/>
</dbReference>
<dbReference type="EMBL" id="CP001663">
    <property type="protein sequence ID" value="AFP40825.1"/>
    <property type="molecule type" value="Genomic_DNA"/>
</dbReference>
<dbReference type="RefSeq" id="WP_011729868.1">
    <property type="nucleotide sequence ID" value="NZ_SIJM01000026.1"/>
</dbReference>
<dbReference type="RefSeq" id="YP_888754.1">
    <property type="nucleotide sequence ID" value="NC_008596.1"/>
</dbReference>
<dbReference type="SMR" id="O52200"/>
<dbReference type="STRING" id="246196.MSMEG_4482"/>
<dbReference type="PaxDb" id="246196-MSMEI_4371"/>
<dbReference type="GeneID" id="93459185"/>
<dbReference type="KEGG" id="msb:LJ00_22175"/>
<dbReference type="KEGG" id="msg:MSMEI_4371"/>
<dbReference type="KEGG" id="msm:MSMEG_4482"/>
<dbReference type="PATRIC" id="fig|246196.19.peg.4388"/>
<dbReference type="eggNOG" id="COG0358">
    <property type="taxonomic scope" value="Bacteria"/>
</dbReference>
<dbReference type="OrthoDB" id="9803773at2"/>
<dbReference type="Proteomes" id="UP000000757">
    <property type="component" value="Chromosome"/>
</dbReference>
<dbReference type="Proteomes" id="UP000006158">
    <property type="component" value="Chromosome"/>
</dbReference>
<dbReference type="GO" id="GO:0005737">
    <property type="term" value="C:cytoplasm"/>
    <property type="evidence" value="ECO:0007669"/>
    <property type="project" value="TreeGrafter"/>
</dbReference>
<dbReference type="GO" id="GO:0000428">
    <property type="term" value="C:DNA-directed RNA polymerase complex"/>
    <property type="evidence" value="ECO:0007669"/>
    <property type="project" value="UniProtKB-KW"/>
</dbReference>
<dbReference type="GO" id="GO:1990077">
    <property type="term" value="C:primosome complex"/>
    <property type="evidence" value="ECO:0007669"/>
    <property type="project" value="UniProtKB-KW"/>
</dbReference>
<dbReference type="GO" id="GO:0003677">
    <property type="term" value="F:DNA binding"/>
    <property type="evidence" value="ECO:0007669"/>
    <property type="project" value="UniProtKB-KW"/>
</dbReference>
<dbReference type="GO" id="GO:0003899">
    <property type="term" value="F:DNA-directed RNA polymerase activity"/>
    <property type="evidence" value="ECO:0007669"/>
    <property type="project" value="InterPro"/>
</dbReference>
<dbReference type="GO" id="GO:0008270">
    <property type="term" value="F:zinc ion binding"/>
    <property type="evidence" value="ECO:0007669"/>
    <property type="project" value="UniProtKB-UniRule"/>
</dbReference>
<dbReference type="GO" id="GO:0006269">
    <property type="term" value="P:DNA replication, synthesis of primer"/>
    <property type="evidence" value="ECO:0007669"/>
    <property type="project" value="UniProtKB-UniRule"/>
</dbReference>
<dbReference type="CDD" id="cd03364">
    <property type="entry name" value="TOPRIM_DnaG_primases"/>
    <property type="match status" value="1"/>
</dbReference>
<dbReference type="FunFam" id="3.90.580.10:FF:000001">
    <property type="entry name" value="DNA primase"/>
    <property type="match status" value="1"/>
</dbReference>
<dbReference type="FunFam" id="3.90.980.10:FF:000001">
    <property type="entry name" value="DNA primase"/>
    <property type="match status" value="1"/>
</dbReference>
<dbReference type="Gene3D" id="3.40.1360.10">
    <property type="match status" value="1"/>
</dbReference>
<dbReference type="Gene3D" id="3.90.980.10">
    <property type="entry name" value="DNA primase, catalytic core, N-terminal domain"/>
    <property type="match status" value="1"/>
</dbReference>
<dbReference type="Gene3D" id="1.20.50.20">
    <property type="entry name" value="DnaG, RNA polymerase domain, helical bundle"/>
    <property type="match status" value="1"/>
</dbReference>
<dbReference type="Gene3D" id="3.90.580.10">
    <property type="entry name" value="Zinc finger, CHC2-type domain"/>
    <property type="match status" value="1"/>
</dbReference>
<dbReference type="HAMAP" id="MF_00974">
    <property type="entry name" value="DNA_primase_DnaG"/>
    <property type="match status" value="1"/>
</dbReference>
<dbReference type="InterPro" id="IPR037068">
    <property type="entry name" value="DNA_primase_core_N_sf"/>
</dbReference>
<dbReference type="InterPro" id="IPR019475">
    <property type="entry name" value="DNA_primase_DnaB-bd"/>
</dbReference>
<dbReference type="InterPro" id="IPR006295">
    <property type="entry name" value="DNA_primase_DnaG"/>
</dbReference>
<dbReference type="InterPro" id="IPR013173">
    <property type="entry name" value="DNA_primase_DnaG_DnaB-bd_dom"/>
</dbReference>
<dbReference type="InterPro" id="IPR036977">
    <property type="entry name" value="DNA_primase_Znf_CHC2"/>
</dbReference>
<dbReference type="InterPro" id="IPR030846">
    <property type="entry name" value="DnaG_bac"/>
</dbReference>
<dbReference type="InterPro" id="IPR013264">
    <property type="entry name" value="DNAG_N"/>
</dbReference>
<dbReference type="InterPro" id="IPR050219">
    <property type="entry name" value="DnaG_primase"/>
</dbReference>
<dbReference type="InterPro" id="IPR034151">
    <property type="entry name" value="TOPRIM_DnaG_bac"/>
</dbReference>
<dbReference type="InterPro" id="IPR006171">
    <property type="entry name" value="TOPRIM_dom"/>
</dbReference>
<dbReference type="InterPro" id="IPR002694">
    <property type="entry name" value="Znf_CHC2"/>
</dbReference>
<dbReference type="NCBIfam" id="TIGR01391">
    <property type="entry name" value="dnaG"/>
    <property type="match status" value="1"/>
</dbReference>
<dbReference type="PANTHER" id="PTHR30313">
    <property type="entry name" value="DNA PRIMASE"/>
    <property type="match status" value="1"/>
</dbReference>
<dbReference type="PANTHER" id="PTHR30313:SF2">
    <property type="entry name" value="DNA PRIMASE"/>
    <property type="match status" value="1"/>
</dbReference>
<dbReference type="Pfam" id="PF10410">
    <property type="entry name" value="DnaB_bind"/>
    <property type="match status" value="1"/>
</dbReference>
<dbReference type="Pfam" id="PF08278">
    <property type="entry name" value="DnaG_DnaB_bind"/>
    <property type="match status" value="1"/>
</dbReference>
<dbReference type="Pfam" id="PF08275">
    <property type="entry name" value="DNAG_N"/>
    <property type="match status" value="1"/>
</dbReference>
<dbReference type="Pfam" id="PF13662">
    <property type="entry name" value="Toprim_4"/>
    <property type="match status" value="1"/>
</dbReference>
<dbReference type="Pfam" id="PF01807">
    <property type="entry name" value="Zn_ribbon_DnaG"/>
    <property type="match status" value="1"/>
</dbReference>
<dbReference type="PIRSF" id="PIRSF002811">
    <property type="entry name" value="DnaG"/>
    <property type="match status" value="1"/>
</dbReference>
<dbReference type="SMART" id="SM00766">
    <property type="entry name" value="DnaG_DnaB_bind"/>
    <property type="match status" value="1"/>
</dbReference>
<dbReference type="SMART" id="SM00493">
    <property type="entry name" value="TOPRIM"/>
    <property type="match status" value="1"/>
</dbReference>
<dbReference type="SMART" id="SM00400">
    <property type="entry name" value="ZnF_CHCC"/>
    <property type="match status" value="1"/>
</dbReference>
<dbReference type="SUPFAM" id="SSF56731">
    <property type="entry name" value="DNA primase core"/>
    <property type="match status" value="1"/>
</dbReference>
<dbReference type="SUPFAM" id="SSF57783">
    <property type="entry name" value="Zinc beta-ribbon"/>
    <property type="match status" value="1"/>
</dbReference>
<dbReference type="PROSITE" id="PS50880">
    <property type="entry name" value="TOPRIM"/>
    <property type="match status" value="1"/>
</dbReference>
<keyword id="KW-0235">DNA replication</keyword>
<keyword id="KW-0238">DNA-binding</keyword>
<keyword id="KW-0240">DNA-directed RNA polymerase</keyword>
<keyword id="KW-0460">Magnesium</keyword>
<keyword id="KW-0479">Metal-binding</keyword>
<keyword id="KW-0548">Nucleotidyltransferase</keyword>
<keyword id="KW-0639">Primosome</keyword>
<keyword id="KW-1185">Reference proteome</keyword>
<keyword id="KW-0804">Transcription</keyword>
<keyword id="KW-0808">Transferase</keyword>
<keyword id="KW-0862">Zinc</keyword>
<keyword id="KW-0863">Zinc-finger</keyword>
<accession>O52200</accession>
<accession>A0R0R6</accession>
<accession>I7FHH6</accession>